<comment type="function">
    <text evidence="1">Catalyzes the deformylation of 4-deoxy-4-formamido-L-arabinose-phosphoundecaprenol to 4-amino-4-deoxy-L-arabinose-phosphoundecaprenol. The modified arabinose is attached to lipid A and is required for resistance to polymyxin and cationic antimicrobial peptides.</text>
</comment>
<comment type="catalytic activity">
    <reaction evidence="1">
        <text>4-deoxy-4-formamido-alpha-L-arabinopyranosyl di-trans,octa-cis-undecaprenyl phosphate + H2O = 4-amino-4-deoxy-alpha-L-arabinopyranosyl di-trans,octa-cis-undecaprenyl phosphate + formate</text>
        <dbReference type="Rhea" id="RHEA:27734"/>
        <dbReference type="ChEBI" id="CHEBI:15377"/>
        <dbReference type="ChEBI" id="CHEBI:15740"/>
        <dbReference type="ChEBI" id="CHEBI:58909"/>
        <dbReference type="ChEBI" id="CHEBI:60463"/>
        <dbReference type="EC" id="3.5.1.n3"/>
    </reaction>
</comment>
<comment type="pathway">
    <text evidence="1">Glycolipid biosynthesis; 4-amino-4-deoxy-alpha-L-arabinose undecaprenyl phosphate biosynthesis; 4-amino-4-deoxy-alpha-L-arabinose undecaprenyl phosphate from UDP-4-deoxy-4-formamido-beta-L-arabinose and undecaprenyl phosphate: step 2/2.</text>
</comment>
<comment type="pathway">
    <text evidence="1">Bacterial outer membrane biogenesis; lipopolysaccharide biosynthesis.</text>
</comment>
<comment type="similarity">
    <text evidence="1">Belongs to the polysaccharide deacetylase family. ArnD deformylase subfamily.</text>
</comment>
<evidence type="ECO:0000255" key="1">
    <source>
        <dbReference type="HAMAP-Rule" id="MF_01870"/>
    </source>
</evidence>
<keyword id="KW-0046">Antibiotic resistance</keyword>
<keyword id="KW-0378">Hydrolase</keyword>
<keyword id="KW-0441">Lipid A biosynthesis</keyword>
<keyword id="KW-0444">Lipid biosynthesis</keyword>
<keyword id="KW-0443">Lipid metabolism</keyword>
<keyword id="KW-0448">Lipopolysaccharide biosynthesis</keyword>
<keyword id="KW-1185">Reference proteome</keyword>
<protein>
    <recommendedName>
        <fullName evidence="1">Probable 4-deoxy-4-formamido-L-arabinose-phosphoundecaprenol deformylase ArnD</fullName>
        <ecNumber evidence="1">3.5.1.n3</ecNumber>
    </recommendedName>
</protein>
<dbReference type="EC" id="3.5.1.n3" evidence="1"/>
<dbReference type="EMBL" id="CP000462">
    <property type="protein sequence ID" value="ABK36737.1"/>
    <property type="molecule type" value="Genomic_DNA"/>
</dbReference>
<dbReference type="RefSeq" id="WP_011704924.1">
    <property type="nucleotide sequence ID" value="NC_008570.1"/>
</dbReference>
<dbReference type="RefSeq" id="YP_855535.1">
    <property type="nucleotide sequence ID" value="NC_008570.1"/>
</dbReference>
<dbReference type="SMR" id="A0KGY5"/>
<dbReference type="STRING" id="380703.AHA_0989"/>
<dbReference type="EnsemblBacteria" id="ABK36737">
    <property type="protein sequence ID" value="ABK36737"/>
    <property type="gene ID" value="AHA_0989"/>
</dbReference>
<dbReference type="GeneID" id="4487530"/>
<dbReference type="KEGG" id="aha:AHA_0989"/>
<dbReference type="PATRIC" id="fig|380703.7.peg.993"/>
<dbReference type="eggNOG" id="COG0726">
    <property type="taxonomic scope" value="Bacteria"/>
</dbReference>
<dbReference type="HOGENOM" id="CLU_084199_0_0_6"/>
<dbReference type="OrthoDB" id="5589314at2"/>
<dbReference type="UniPathway" id="UPA00030"/>
<dbReference type="UniPathway" id="UPA00036">
    <property type="reaction ID" value="UER00496"/>
</dbReference>
<dbReference type="Proteomes" id="UP000000756">
    <property type="component" value="Chromosome"/>
</dbReference>
<dbReference type="GO" id="GO:0016020">
    <property type="term" value="C:membrane"/>
    <property type="evidence" value="ECO:0007669"/>
    <property type="project" value="GOC"/>
</dbReference>
<dbReference type="GO" id="GO:0016811">
    <property type="term" value="F:hydrolase activity, acting on carbon-nitrogen (but not peptide) bonds, in linear amides"/>
    <property type="evidence" value="ECO:0007669"/>
    <property type="project" value="UniProtKB-UniRule"/>
</dbReference>
<dbReference type="GO" id="GO:0036108">
    <property type="term" value="P:4-amino-4-deoxy-alpha-L-arabinopyranosyl undecaprenyl phosphate biosynthetic process"/>
    <property type="evidence" value="ECO:0007669"/>
    <property type="project" value="UniProtKB-UniRule"/>
</dbReference>
<dbReference type="GO" id="GO:0009245">
    <property type="term" value="P:lipid A biosynthetic process"/>
    <property type="evidence" value="ECO:0007669"/>
    <property type="project" value="UniProtKB-UniRule"/>
</dbReference>
<dbReference type="GO" id="GO:0009103">
    <property type="term" value="P:lipopolysaccharide biosynthetic process"/>
    <property type="evidence" value="ECO:0007669"/>
    <property type="project" value="UniProtKB-UniRule"/>
</dbReference>
<dbReference type="GO" id="GO:0046677">
    <property type="term" value="P:response to antibiotic"/>
    <property type="evidence" value="ECO:0007669"/>
    <property type="project" value="UniProtKB-KW"/>
</dbReference>
<dbReference type="Gene3D" id="3.20.20.370">
    <property type="entry name" value="Glycoside hydrolase/deacetylase"/>
    <property type="match status" value="1"/>
</dbReference>
<dbReference type="HAMAP" id="MF_01870">
    <property type="entry name" value="ArnD"/>
    <property type="match status" value="1"/>
</dbReference>
<dbReference type="InterPro" id="IPR023557">
    <property type="entry name" value="ArnD"/>
</dbReference>
<dbReference type="InterPro" id="IPR011330">
    <property type="entry name" value="Glyco_hydro/deAcase_b/a-brl"/>
</dbReference>
<dbReference type="InterPro" id="IPR002509">
    <property type="entry name" value="NODB_dom"/>
</dbReference>
<dbReference type="NCBIfam" id="NF011923">
    <property type="entry name" value="PRK15394.1"/>
    <property type="match status" value="1"/>
</dbReference>
<dbReference type="Pfam" id="PF01522">
    <property type="entry name" value="Polysacc_deac_1"/>
    <property type="match status" value="1"/>
</dbReference>
<dbReference type="SUPFAM" id="SSF88713">
    <property type="entry name" value="Glycoside hydrolase/deacetylase"/>
    <property type="match status" value="1"/>
</dbReference>
<dbReference type="PROSITE" id="PS51677">
    <property type="entry name" value="NODB"/>
    <property type="match status" value="1"/>
</dbReference>
<gene>
    <name evidence="1" type="primary">arnD</name>
    <name type="ordered locus">AHA_0989</name>
</gene>
<proteinExistence type="inferred from homology"/>
<accession>A0KGY5</accession>
<name>ARND_AERHH</name>
<sequence>MTEVGLRIDVDTFRGTRDGVPRLLQLLDKHQVKGSFFFSVGPDNMGRHLWRLLKPRFLLKMLRSNAASLYGLDILLAGTAWPGKSIGKQLGSLMRDTDSARHEVGLHAWDHHGWQANTGRWDEAELARQTRLGVDALNQILGREVDCSAAAGWRADPLTTQAKEPFGFRYNSDCRGSGLFRPLLQDGRPGTPQIPVNLPTFDEVVGHQVTVDDFNRFLLDQLATPPAQGQHVYTIHAEVEGIVMADQFDALLGEARARGIRFVPLGDLLPSDPTTLPTGRLVRGTLPGREGWLGCKAEA</sequence>
<feature type="chain" id="PRO_0000383490" description="Probable 4-deoxy-4-formamido-L-arabinose-phosphoundecaprenol deformylase ArnD">
    <location>
        <begin position="1"/>
        <end position="299"/>
    </location>
</feature>
<feature type="domain" description="NodB homology" evidence="1">
    <location>
        <begin position="2"/>
        <end position="263"/>
    </location>
</feature>
<organism>
    <name type="scientific">Aeromonas hydrophila subsp. hydrophila (strain ATCC 7966 / DSM 30187 / BCRC 13018 / CCUG 14551 / JCM 1027 / KCTC 2358 / NCIMB 9240 / NCTC 8049)</name>
    <dbReference type="NCBI Taxonomy" id="380703"/>
    <lineage>
        <taxon>Bacteria</taxon>
        <taxon>Pseudomonadati</taxon>
        <taxon>Pseudomonadota</taxon>
        <taxon>Gammaproteobacteria</taxon>
        <taxon>Aeromonadales</taxon>
        <taxon>Aeromonadaceae</taxon>
        <taxon>Aeromonas</taxon>
    </lineage>
</organism>
<reference key="1">
    <citation type="journal article" date="2006" name="J. Bacteriol.">
        <title>Genome sequence of Aeromonas hydrophila ATCC 7966T: jack of all trades.</title>
        <authorList>
            <person name="Seshadri R."/>
            <person name="Joseph S.W."/>
            <person name="Chopra A.K."/>
            <person name="Sha J."/>
            <person name="Shaw J."/>
            <person name="Graf J."/>
            <person name="Haft D.H."/>
            <person name="Wu M."/>
            <person name="Ren Q."/>
            <person name="Rosovitz M.J."/>
            <person name="Madupu R."/>
            <person name="Tallon L."/>
            <person name="Kim M."/>
            <person name="Jin S."/>
            <person name="Vuong H."/>
            <person name="Stine O.C."/>
            <person name="Ali A."/>
            <person name="Horneman A.J."/>
            <person name="Heidelberg J.F."/>
        </authorList>
    </citation>
    <scope>NUCLEOTIDE SEQUENCE [LARGE SCALE GENOMIC DNA]</scope>
    <source>
        <strain>ATCC 7966 / DSM 30187 / BCRC 13018 / CCUG 14551 / JCM 1027 / KCTC 2358 / NCIMB 9240 / NCTC 8049</strain>
    </source>
</reference>